<organism>
    <name type="scientific">Wolinella succinogenes (strain ATCC 29543 / DSM 1740 / CCUG 13145 / JCM 31913 / LMG 7466 / NCTC 11488 / FDC 602W)</name>
    <name type="common">Vibrio succinogenes</name>
    <dbReference type="NCBI Taxonomy" id="273121"/>
    <lineage>
        <taxon>Bacteria</taxon>
        <taxon>Pseudomonadati</taxon>
        <taxon>Campylobacterota</taxon>
        <taxon>Epsilonproteobacteria</taxon>
        <taxon>Campylobacterales</taxon>
        <taxon>Helicobacteraceae</taxon>
        <taxon>Wolinella</taxon>
    </lineage>
</organism>
<protein>
    <recommendedName>
        <fullName evidence="1">Histidinol-phosphate aminotransferase</fullName>
        <ecNumber evidence="1">2.6.1.9</ecNumber>
    </recommendedName>
    <alternativeName>
        <fullName evidence="1">Imidazole acetol-phosphate transaminase</fullName>
    </alternativeName>
</protein>
<evidence type="ECO:0000255" key="1">
    <source>
        <dbReference type="HAMAP-Rule" id="MF_01023"/>
    </source>
</evidence>
<keyword id="KW-0028">Amino-acid biosynthesis</keyword>
<keyword id="KW-0032">Aminotransferase</keyword>
<keyword id="KW-0368">Histidine biosynthesis</keyword>
<keyword id="KW-0663">Pyridoxal phosphate</keyword>
<keyword id="KW-1185">Reference proteome</keyword>
<keyword id="KW-0808">Transferase</keyword>
<feature type="chain" id="PRO_0000153479" description="Histidinol-phosphate aminotransferase">
    <location>
        <begin position="1"/>
        <end position="367"/>
    </location>
</feature>
<feature type="modified residue" description="N6-(pyridoxal phosphate)lysine" evidence="1">
    <location>
        <position position="226"/>
    </location>
</feature>
<sequence>MQFNPTLDSIKTYEAGKPIELVVREYGIKPQNVIKLASNENPFGASPKVIEAIAKEAVNAHRYPDDSMFELKEGLAGRFGVKSENVIIGSGSDQILEMAVHAKCNASSKVLMSKTTFAMYDVYSRQVGARILRTPSDQHHLGEFWEIYQKERPEILFLCLPNNPLGECLDREEVYDFLQKIDDETLVIVDGAYQEYAAFKDSQKRIDPKDLIERFPSSIFLGTFSKAFGLGGMRVGYGIAQPSIIQALMKMRAPFNITTLSLKAAIEALKESAYVEETIKENFKEMRRYEEFALAQGIDFIPSYTNFITLLLKNRVDSSEFSQWLLERGLIVRNLKSYGINAIRITIGRSLENDRCFELMQEYLHQF</sequence>
<reference key="1">
    <citation type="journal article" date="2003" name="Proc. Natl. Acad. Sci. U.S.A.">
        <title>Complete genome sequence and analysis of Wolinella succinogenes.</title>
        <authorList>
            <person name="Baar C."/>
            <person name="Eppinger M."/>
            <person name="Raddatz G."/>
            <person name="Simon J."/>
            <person name="Lanz C."/>
            <person name="Klimmek O."/>
            <person name="Nandakumar R."/>
            <person name="Gross R."/>
            <person name="Rosinus A."/>
            <person name="Keller H."/>
            <person name="Jagtap P."/>
            <person name="Linke B."/>
            <person name="Meyer F."/>
            <person name="Lederer H."/>
            <person name="Schuster S.C."/>
        </authorList>
    </citation>
    <scope>NUCLEOTIDE SEQUENCE [LARGE SCALE GENOMIC DNA]</scope>
    <source>
        <strain>ATCC 29543 / DSM 1740 / CCUG 13145 / JCM 31913 / LMG 7466 / NCTC 11488 / FDC 602W</strain>
    </source>
</reference>
<proteinExistence type="inferred from homology"/>
<name>HIS8_WOLSU</name>
<accession>Q7M7Y6</accession>
<gene>
    <name evidence="1" type="primary">hisC</name>
    <name type="ordered locus">WS2000</name>
</gene>
<dbReference type="EC" id="2.6.1.9" evidence="1"/>
<dbReference type="EMBL" id="BX571662">
    <property type="protein sequence ID" value="CAE11002.1"/>
    <property type="molecule type" value="Genomic_DNA"/>
</dbReference>
<dbReference type="RefSeq" id="WP_011139784.1">
    <property type="nucleotide sequence ID" value="NC_005090.1"/>
</dbReference>
<dbReference type="SMR" id="Q7M7Y6"/>
<dbReference type="STRING" id="273121.WS2000"/>
<dbReference type="KEGG" id="wsu:WS2000"/>
<dbReference type="eggNOG" id="COG0079">
    <property type="taxonomic scope" value="Bacteria"/>
</dbReference>
<dbReference type="HOGENOM" id="CLU_017584_3_3_7"/>
<dbReference type="UniPathway" id="UPA00031">
    <property type="reaction ID" value="UER00012"/>
</dbReference>
<dbReference type="Proteomes" id="UP000000422">
    <property type="component" value="Chromosome"/>
</dbReference>
<dbReference type="GO" id="GO:0004400">
    <property type="term" value="F:histidinol-phosphate transaminase activity"/>
    <property type="evidence" value="ECO:0007669"/>
    <property type="project" value="UniProtKB-UniRule"/>
</dbReference>
<dbReference type="GO" id="GO:0030170">
    <property type="term" value="F:pyridoxal phosphate binding"/>
    <property type="evidence" value="ECO:0007669"/>
    <property type="project" value="InterPro"/>
</dbReference>
<dbReference type="GO" id="GO:0000105">
    <property type="term" value="P:L-histidine biosynthetic process"/>
    <property type="evidence" value="ECO:0007669"/>
    <property type="project" value="UniProtKB-UniRule"/>
</dbReference>
<dbReference type="CDD" id="cd00609">
    <property type="entry name" value="AAT_like"/>
    <property type="match status" value="1"/>
</dbReference>
<dbReference type="Gene3D" id="3.90.1150.10">
    <property type="entry name" value="Aspartate Aminotransferase, domain 1"/>
    <property type="match status" value="1"/>
</dbReference>
<dbReference type="Gene3D" id="3.40.640.10">
    <property type="entry name" value="Type I PLP-dependent aspartate aminotransferase-like (Major domain)"/>
    <property type="match status" value="1"/>
</dbReference>
<dbReference type="HAMAP" id="MF_01023">
    <property type="entry name" value="HisC_aminotrans_2"/>
    <property type="match status" value="1"/>
</dbReference>
<dbReference type="InterPro" id="IPR001917">
    <property type="entry name" value="Aminotrans_II_pyridoxalP_BS"/>
</dbReference>
<dbReference type="InterPro" id="IPR004839">
    <property type="entry name" value="Aminotransferase_I/II_large"/>
</dbReference>
<dbReference type="InterPro" id="IPR005861">
    <property type="entry name" value="HisP_aminotrans"/>
</dbReference>
<dbReference type="InterPro" id="IPR050106">
    <property type="entry name" value="HistidinolP_aminotransfase"/>
</dbReference>
<dbReference type="InterPro" id="IPR015424">
    <property type="entry name" value="PyrdxlP-dep_Trfase"/>
</dbReference>
<dbReference type="InterPro" id="IPR015421">
    <property type="entry name" value="PyrdxlP-dep_Trfase_major"/>
</dbReference>
<dbReference type="InterPro" id="IPR015422">
    <property type="entry name" value="PyrdxlP-dep_Trfase_small"/>
</dbReference>
<dbReference type="NCBIfam" id="TIGR01141">
    <property type="entry name" value="hisC"/>
    <property type="match status" value="1"/>
</dbReference>
<dbReference type="PANTHER" id="PTHR43643:SF3">
    <property type="entry name" value="HISTIDINOL-PHOSPHATE AMINOTRANSFERASE"/>
    <property type="match status" value="1"/>
</dbReference>
<dbReference type="PANTHER" id="PTHR43643">
    <property type="entry name" value="HISTIDINOL-PHOSPHATE AMINOTRANSFERASE 2"/>
    <property type="match status" value="1"/>
</dbReference>
<dbReference type="Pfam" id="PF00155">
    <property type="entry name" value="Aminotran_1_2"/>
    <property type="match status" value="1"/>
</dbReference>
<dbReference type="SUPFAM" id="SSF53383">
    <property type="entry name" value="PLP-dependent transferases"/>
    <property type="match status" value="1"/>
</dbReference>
<dbReference type="PROSITE" id="PS00599">
    <property type="entry name" value="AA_TRANSFER_CLASS_2"/>
    <property type="match status" value="1"/>
</dbReference>
<comment type="catalytic activity">
    <reaction evidence="1">
        <text>L-histidinol phosphate + 2-oxoglutarate = 3-(imidazol-4-yl)-2-oxopropyl phosphate + L-glutamate</text>
        <dbReference type="Rhea" id="RHEA:23744"/>
        <dbReference type="ChEBI" id="CHEBI:16810"/>
        <dbReference type="ChEBI" id="CHEBI:29985"/>
        <dbReference type="ChEBI" id="CHEBI:57766"/>
        <dbReference type="ChEBI" id="CHEBI:57980"/>
        <dbReference type="EC" id="2.6.1.9"/>
    </reaction>
</comment>
<comment type="cofactor">
    <cofactor evidence="1">
        <name>pyridoxal 5'-phosphate</name>
        <dbReference type="ChEBI" id="CHEBI:597326"/>
    </cofactor>
</comment>
<comment type="pathway">
    <text evidence="1">Amino-acid biosynthesis; L-histidine biosynthesis; L-histidine from 5-phospho-alpha-D-ribose 1-diphosphate: step 7/9.</text>
</comment>
<comment type="subunit">
    <text evidence="1">Homodimer.</text>
</comment>
<comment type="similarity">
    <text evidence="1">Belongs to the class-II pyridoxal-phosphate-dependent aminotransferase family. Histidinol-phosphate aminotransferase subfamily.</text>
</comment>